<name>C1GLT_BIOGL</name>
<protein>
    <recommendedName>
        <fullName evidence="9">Glycoprotein-N-acetylgalactosamine 3-beta-galactosyltransferase 1</fullName>
        <ecNumber evidence="6">2.4.1.122</ecNumber>
    </recommendedName>
    <alternativeName>
        <fullName evidence="8">Glycoprotein-N-acetylgalactosamine beta-1,3-galactosyltransferase</fullName>
        <shortName evidence="8">Beta-1,3-galactosyltransferase</shortName>
    </alternativeName>
    <alternativeName>
        <fullName evidence="8">T-synthase</fullName>
    </alternativeName>
</protein>
<proteinExistence type="evidence at protein level"/>
<comment type="function">
    <text evidence="6">Glycosyltransferase that generates the core 1 O-glycan Gal-beta1-3GalNAc-alpha1-Ser/Thr (T antigen), which is a precursor for many extended O-glycans in glycoproteins.</text>
</comment>
<comment type="catalytic activity">
    <reaction evidence="6">
        <text>an N-acetyl-alpha-D-galactosaminyl derivative + UDP-alpha-D-galactose = a beta-D-galactosyl-(1-&gt;3)-N-acetyl-alpha-D-galactosaminyl derivative + UDP + H(+)</text>
        <dbReference type="Rhea" id="RHEA:15621"/>
        <dbReference type="ChEBI" id="CHEBI:15378"/>
        <dbReference type="ChEBI" id="CHEBI:28257"/>
        <dbReference type="ChEBI" id="CHEBI:58223"/>
        <dbReference type="ChEBI" id="CHEBI:66914"/>
        <dbReference type="ChEBI" id="CHEBI:133470"/>
        <dbReference type="EC" id="2.4.1.122"/>
    </reaction>
</comment>
<comment type="cofactor">
    <cofactor evidence="6">
        <name>Mn(2+)</name>
        <dbReference type="ChEBI" id="CHEBI:29035"/>
    </cofactor>
</comment>
<comment type="biophysicochemical properties">
    <phDependence>
        <text evidence="6">Optimum pH is 6.5.</text>
    </phDependence>
    <temperatureDependence>
        <text evidence="6">Optimum temperature is 37 degrees Celsius. Active in a wide temperature range from 4-50 degrees Celsius. Activity is not affected by storage at temperatures ranging from -80 to 37 degrees Celsius for 24 h.</text>
    </temperatureDependence>
</comment>
<comment type="pathway">
    <text evidence="6">Protein modification; protein glycosylation.</text>
</comment>
<comment type="subunit">
    <text evidence="1">Homodimer; disulfide-linked.</text>
</comment>
<comment type="subcellular location">
    <subcellularLocation>
        <location evidence="2">Membrane</location>
        <topology evidence="9">Single-pass type II membrane protein</topology>
    </subcellularLocation>
</comment>
<comment type="similarity">
    <text evidence="9">Belongs to the glycosyltransferase 31 family. Beta3-Gal-T subfamily.</text>
</comment>
<organism evidence="10">
    <name type="scientific">Biomphalaria glabrata</name>
    <name type="common">Bloodfluke planorb</name>
    <name type="synonym">Freshwater snail</name>
    <dbReference type="NCBI Taxonomy" id="6526"/>
    <lineage>
        <taxon>Eukaryota</taxon>
        <taxon>Metazoa</taxon>
        <taxon>Spiralia</taxon>
        <taxon>Lophotrochozoa</taxon>
        <taxon>Mollusca</taxon>
        <taxon>Gastropoda</taxon>
        <taxon>Heterobranchia</taxon>
        <taxon>Euthyneura</taxon>
        <taxon>Panpulmonata</taxon>
        <taxon>Hygrophila</taxon>
        <taxon>Lymnaeoidea</taxon>
        <taxon>Planorbidae</taxon>
        <taxon>Biomphalaria</taxon>
    </lineage>
</organism>
<accession>A0A2C9JXL4</accession>
<evidence type="ECO:0000250" key="1">
    <source>
        <dbReference type="UniProtKB" id="Q7K237"/>
    </source>
</evidence>
<evidence type="ECO:0000250" key="2">
    <source>
        <dbReference type="UniProtKB" id="Q9JJ05"/>
    </source>
</evidence>
<evidence type="ECO:0000255" key="3"/>
<evidence type="ECO:0000255" key="4">
    <source>
        <dbReference type="PROSITE-ProRule" id="PRU00498"/>
    </source>
</evidence>
<evidence type="ECO:0000256" key="5">
    <source>
        <dbReference type="SAM" id="MobiDB-lite"/>
    </source>
</evidence>
<evidence type="ECO:0000269" key="6">
    <source>
    </source>
</evidence>
<evidence type="ECO:0000303" key="7">
    <source>
    </source>
</evidence>
<evidence type="ECO:0000303" key="8">
    <source>
    </source>
</evidence>
<evidence type="ECO:0000305" key="9"/>
<evidence type="ECO:0000312" key="10">
    <source>
        <dbReference type="Proteomes" id="UP000076420"/>
    </source>
</evidence>
<reference evidence="9" key="1">
    <citation type="journal article" date="2017" name="Nat. Commun.">
        <title>Whole genome analysis of a schistosomiasis-transmitting freshwater snail.</title>
        <authorList>
            <person name="Adema C.M."/>
            <person name="Hillier L.W."/>
            <person name="Jones C.S."/>
            <person name="Loker E.S."/>
            <person name="Knight M."/>
            <person name="Minx P."/>
            <person name="Oliveira G."/>
            <person name="Raghavan N."/>
            <person name="Shedlock A."/>
            <person name="do Amaral L.R."/>
            <person name="Arican-Goktas H.D."/>
            <person name="Assis J.G."/>
            <person name="Baba E.H."/>
            <person name="Baron O.L."/>
            <person name="Bayne C.J."/>
            <person name="Bickham-Wright U."/>
            <person name="Biggar K.K."/>
            <person name="Blouin M."/>
            <person name="Bonning B.C."/>
            <person name="Botka C."/>
            <person name="Bridger J.M."/>
            <person name="Buckley K.M."/>
            <person name="Buddenborg S.K."/>
            <person name="Lima Caldeira R."/>
            <person name="Carleton J."/>
            <person name="Carvalho O.S."/>
            <person name="Castillo M.G."/>
            <person name="Chalmers I.W."/>
            <person name="Christensens M."/>
            <person name="Clifton S."/>
            <person name="Cosseau C."/>
            <person name="Coustau C."/>
            <person name="Cripps R.M."/>
            <person name="Cuesta-Astroz Y."/>
            <person name="Cummins S.F."/>
            <person name="di Stephano L."/>
            <person name="Dinguirard N."/>
            <person name="Duval D."/>
            <person name="Emrich S."/>
            <person name="Feschotte C."/>
            <person name="Feyereisen R."/>
            <person name="FitzGerald P."/>
            <person name="Fronick C."/>
            <person name="Fulton L."/>
            <person name="Galinier R."/>
            <person name="Gava S.G."/>
            <person name="Geusz M."/>
            <person name="Geyer K.K."/>
            <person name="Giraldo-Calderon G.I."/>
            <person name="de Souza Gomes M."/>
            <person name="Gordy M.A."/>
            <person name="Gourbal B."/>
            <person name="Grunau C."/>
            <person name="Hanington P.C."/>
            <person name="Hoffmann K.F."/>
            <person name="Hughes D."/>
            <person name="Humphries J."/>
            <person name="Jackson D.J."/>
            <person name="Jannotti-Passos L.K."/>
            <person name="de Jesus Jeremias W."/>
            <person name="Jobling S."/>
            <person name="Kamel B."/>
            <person name="Kapusta A."/>
            <person name="Kaur S."/>
            <person name="Koene J.M."/>
            <person name="Kohn A.B."/>
            <person name="Lawson D."/>
            <person name="Lawton S.P."/>
            <person name="Liang D."/>
            <person name="Limpanont Y."/>
            <person name="Liu S."/>
            <person name="Lockyer A.E."/>
            <person name="Lovato T.L."/>
            <person name="Ludolf F."/>
            <person name="Magrini V."/>
            <person name="McManus D.P."/>
            <person name="Medina M."/>
            <person name="Misra M."/>
            <person name="Mitta G."/>
            <person name="Mkoji G.M."/>
            <person name="Montague M.J."/>
            <person name="Montelongo C."/>
            <person name="Moroz L.L."/>
            <person name="Munoz-Torres M.C."/>
            <person name="Niazi U."/>
            <person name="Noble L.R."/>
            <person name="Oliveira F.S."/>
            <person name="Pais F.S."/>
            <person name="Papenfuss A.T."/>
            <person name="Peace R."/>
            <person name="Pena J.J."/>
            <person name="Pila E.A."/>
            <person name="Quelais T."/>
            <person name="Raney B.J."/>
            <person name="Rast J.P."/>
            <person name="Rollinson D."/>
            <person name="Rosse I.C."/>
            <person name="Rotgans B."/>
            <person name="Routledge E.J."/>
            <person name="Ryan K.M."/>
            <person name="Scholte L.L.S."/>
            <person name="Storey K.B."/>
            <person name="Swain M."/>
            <person name="Tennessen J.A."/>
            <person name="Tomlinson C."/>
            <person name="Trujillo D.L."/>
            <person name="Volpi E.V."/>
            <person name="Walker A.J."/>
            <person name="Wang T."/>
            <person name="Wannaporn I."/>
            <person name="Warren W.C."/>
            <person name="Wu X.J."/>
            <person name="Yoshino T.P."/>
            <person name="Yusuf M."/>
            <person name="Zhang S.M."/>
            <person name="Zhao M."/>
            <person name="Wilson R.K."/>
        </authorList>
    </citation>
    <scope>NUCLEOTIDE SEQUENCE [LARGE SCALE GENOMIC DNA]</scope>
    <source>
        <strain evidence="7">BB02</strain>
    </source>
</reference>
<reference evidence="9" key="2">
    <citation type="journal article" date="2023" name="Molecules">
        <title>Expression and Characterisation of the First Snail-Derived UDP-Gal: Glycoprotein-N-acetylgalactosamine beta-1,3-Galactosyltransferase (T-Synthase) from Biomphalaria glabrata.</title>
        <authorList>
            <person name="Zemkollari M."/>
            <person name="Blaukopf M."/>
            <person name="Grabherr R."/>
            <person name="Staudacher E."/>
        </authorList>
    </citation>
    <scope>IDENTIFICATION</scope>
    <scope>SYNTHESIS</scope>
    <scope>FUNCTION</scope>
    <scope>CATALYTIC ACTIVITY</scope>
    <scope>COFACTOR</scope>
    <scope>BIOPHYSICOCHEMICAL PROPERTIES</scope>
    <scope>PATHWAY</scope>
</reference>
<dbReference type="EC" id="2.4.1.122" evidence="6"/>
<dbReference type="RefSeq" id="XP_013087821.1">
    <property type="nucleotide sequence ID" value="XM_013232367.1"/>
</dbReference>
<dbReference type="RefSeq" id="XP_013087822.1">
    <property type="nucleotide sequence ID" value="XM_013232368.1"/>
</dbReference>
<dbReference type="SMR" id="A0A2C9JXL4"/>
<dbReference type="EnsemblMetazoa" id="BGLB009677-RC">
    <property type="protein sequence ID" value="BGLB009677-PC"/>
    <property type="gene ID" value="BGLB009677"/>
</dbReference>
<dbReference type="EnsemblMetazoa" id="BGLB009677-RD">
    <property type="protein sequence ID" value="BGLB009677-PD"/>
    <property type="gene ID" value="BGLB009677"/>
</dbReference>
<dbReference type="GeneID" id="106072098"/>
<dbReference type="KEGG" id="bgt:106072098"/>
<dbReference type="VEuPathDB" id="VectorBase:BGLAX_043944"/>
<dbReference type="VEuPathDB" id="VectorBase:BGLB009677"/>
<dbReference type="OrthoDB" id="414175at2759"/>
<dbReference type="UniPathway" id="UPA00378"/>
<dbReference type="Proteomes" id="UP000076420">
    <property type="component" value="Unassembled WGS sequence"/>
</dbReference>
<dbReference type="Proteomes" id="UP001165740">
    <property type="component" value="Chromosome 1"/>
</dbReference>
<dbReference type="GO" id="GO:0016020">
    <property type="term" value="C:membrane"/>
    <property type="evidence" value="ECO:0007669"/>
    <property type="project" value="UniProtKB-SubCell"/>
</dbReference>
<dbReference type="GO" id="GO:0016263">
    <property type="term" value="F:glycoprotein-N-acetylgalactosamine 3-beta-galactosyltransferase activity"/>
    <property type="evidence" value="ECO:0000314"/>
    <property type="project" value="UniProtKB"/>
</dbReference>
<dbReference type="GO" id="GO:0030145">
    <property type="term" value="F:manganese ion binding"/>
    <property type="evidence" value="ECO:0000314"/>
    <property type="project" value="UniProtKB"/>
</dbReference>
<dbReference type="GO" id="GO:0000166">
    <property type="term" value="F:nucleotide binding"/>
    <property type="evidence" value="ECO:0007669"/>
    <property type="project" value="UniProtKB-KW"/>
</dbReference>
<dbReference type="GO" id="GO:0016267">
    <property type="term" value="P:core 1 O-glycan biosynthetic process"/>
    <property type="evidence" value="ECO:0007669"/>
    <property type="project" value="TreeGrafter"/>
</dbReference>
<dbReference type="GO" id="GO:0006486">
    <property type="term" value="P:protein glycosylation"/>
    <property type="evidence" value="ECO:0000314"/>
    <property type="project" value="UniProtKB"/>
</dbReference>
<dbReference type="FunFam" id="3.90.550.50:FF:000017">
    <property type="entry name" value="Glycoprotein-N-acetylgalactosamine 3-beta-galactosyltransferase 1"/>
    <property type="match status" value="1"/>
</dbReference>
<dbReference type="Gene3D" id="3.90.550.50">
    <property type="match status" value="1"/>
</dbReference>
<dbReference type="InterPro" id="IPR026050">
    <property type="entry name" value="C1GALT1/C1GALT1_chp1"/>
</dbReference>
<dbReference type="InterPro" id="IPR003378">
    <property type="entry name" value="Fringe-like_glycosylTrfase"/>
</dbReference>
<dbReference type="PANTHER" id="PTHR23033">
    <property type="entry name" value="BETA1,3-GALACTOSYLTRANSFERASE"/>
    <property type="match status" value="1"/>
</dbReference>
<dbReference type="PANTHER" id="PTHR23033:SF14">
    <property type="entry name" value="GLYCOPROTEIN-N-ACETYLGALACTOSAMINE 3-BETA-GALACTOSYLTRANSFERASE 1-RELATED"/>
    <property type="match status" value="1"/>
</dbReference>
<dbReference type="Pfam" id="PF02434">
    <property type="entry name" value="Fringe"/>
    <property type="match status" value="1"/>
</dbReference>
<feature type="chain" id="PRO_0000459703" description="Glycoprotein-N-acetylgalactosamine 3-beta-galactosyltransferase 1">
    <location>
        <begin position="1"/>
        <end position="388"/>
    </location>
</feature>
<feature type="topological domain" description="Cytoplasmic" evidence="9">
    <location>
        <begin position="1"/>
        <end position="12"/>
    </location>
</feature>
<feature type="transmembrane region" description="Helical; Signal-anchor for type II membrane protein" evidence="3">
    <location>
        <begin position="13"/>
        <end position="30"/>
    </location>
</feature>
<feature type="topological domain" description="Lumenal" evidence="9">
    <location>
        <begin position="31"/>
        <end position="388"/>
    </location>
</feature>
<feature type="region of interest" description="Disordered" evidence="5">
    <location>
        <begin position="43"/>
        <end position="65"/>
    </location>
</feature>
<feature type="region of interest" description="Disordered" evidence="5">
    <location>
        <begin position="344"/>
        <end position="388"/>
    </location>
</feature>
<feature type="compositionally biased region" description="Basic and acidic residues" evidence="5">
    <location>
        <begin position="347"/>
        <end position="368"/>
    </location>
</feature>
<feature type="binding site" evidence="1">
    <location>
        <position position="98"/>
    </location>
    <ligand>
        <name>UDP</name>
        <dbReference type="ChEBI" id="CHEBI:58223"/>
    </ligand>
</feature>
<feature type="binding site" evidence="1">
    <location>
        <position position="100"/>
    </location>
    <ligand>
        <name>UDP</name>
        <dbReference type="ChEBI" id="CHEBI:58223"/>
    </ligand>
</feature>
<feature type="binding site" evidence="1">
    <location>
        <position position="142"/>
    </location>
    <ligand>
        <name>UDP</name>
        <dbReference type="ChEBI" id="CHEBI:58223"/>
    </ligand>
</feature>
<feature type="binding site" evidence="1">
    <location>
        <position position="143"/>
    </location>
    <ligand>
        <name>UDP</name>
        <dbReference type="ChEBI" id="CHEBI:58223"/>
    </ligand>
</feature>
<feature type="binding site" evidence="1">
    <location>
        <position position="144"/>
    </location>
    <ligand>
        <name>UDP</name>
        <dbReference type="ChEBI" id="CHEBI:58223"/>
    </ligand>
</feature>
<feature type="binding site" evidence="1">
    <location>
        <position position="150"/>
    </location>
    <ligand>
        <name>UDP</name>
        <dbReference type="ChEBI" id="CHEBI:58223"/>
    </ligand>
</feature>
<feature type="binding site" evidence="1">
    <location>
        <position position="173"/>
    </location>
    <ligand>
        <name>Mn(2+)</name>
        <dbReference type="ChEBI" id="CHEBI:29035"/>
    </ligand>
</feature>
<feature type="binding site" evidence="1">
    <location>
        <position position="173"/>
    </location>
    <ligand>
        <name>UDP</name>
        <dbReference type="ChEBI" id="CHEBI:58223"/>
    </ligand>
</feature>
<feature type="binding site" evidence="1">
    <location>
        <position position="175"/>
    </location>
    <ligand>
        <name>Mn(2+)</name>
        <dbReference type="ChEBI" id="CHEBI:29035"/>
    </ligand>
</feature>
<feature type="binding site" evidence="1">
    <location>
        <position position="292"/>
    </location>
    <ligand>
        <name>a glycoprotein</name>
        <dbReference type="ChEBI" id="CHEBI:17089"/>
    </ligand>
</feature>
<feature type="binding site" evidence="1">
    <location>
        <position position="316"/>
    </location>
    <ligand>
        <name>Mn(2+)</name>
        <dbReference type="ChEBI" id="CHEBI:29035"/>
    </ligand>
</feature>
<feature type="binding site" evidence="1">
    <location>
        <position position="316"/>
    </location>
    <ligand>
        <name>UDP</name>
        <dbReference type="ChEBI" id="CHEBI:58223"/>
    </ligand>
</feature>
<feature type="binding site" evidence="1">
    <location>
        <position position="317"/>
    </location>
    <ligand>
        <name>UDP</name>
        <dbReference type="ChEBI" id="CHEBI:58223"/>
    </ligand>
</feature>
<feature type="glycosylation site" description="N-linked (GlcNAc...) asparagine" evidence="4">
    <location>
        <position position="80"/>
    </location>
</feature>
<feature type="glycosylation site" description="N-linked (GlcNAc...) asparagine" evidence="4">
    <location>
        <position position="376"/>
    </location>
</feature>
<feature type="disulfide bond" evidence="1">
    <location>
        <begin position="95"/>
        <end position="119"/>
    </location>
</feature>
<feature type="disulfide bond" evidence="1">
    <location>
        <begin position="238"/>
        <end position="253"/>
    </location>
</feature>
<feature type="disulfide bond" evidence="1">
    <location>
        <begin position="307"/>
        <end position="308"/>
    </location>
</feature>
<sequence>MAPISHYIGKTSLTTLAIGIAIGITVSNIVKFSSTQRRHFSSSGYIPDSPHSHGENDFVEGPDDSLSWHDEHSHSHKFENDSVARQLFKKVRVLCWVMTNPNNIHTKARHVKATWGKRCNVLLFMSSRADRDLPALALNVQEGRDNLWAKTKEAFKLIHSKYLETADWFIKCDDDTFLVLENLRYFLQDKSPSEPVYYGRKFKPIVQQGYMSGGAGYVLSKESLVRLVTQGIGHKEDCRADSGGAEDVEMGRCLQSVNVQAGDSRDELGRERFHPFVPEHHLIPDILPPDMWYWSYNFYPAKQGQECCSDYAISFHYVPPNMMYVLEYLVYHLKPYGITSAYESTEEQDHGSSHKDTDAMKPEGKGMEDKEDEETNISLAQTDSKHIS</sequence>
<keyword id="KW-1015">Disulfide bond</keyword>
<keyword id="KW-0325">Glycoprotein</keyword>
<keyword id="KW-0328">Glycosyltransferase</keyword>
<keyword id="KW-0464">Manganese</keyword>
<keyword id="KW-0472">Membrane</keyword>
<keyword id="KW-0479">Metal-binding</keyword>
<keyword id="KW-0547">Nucleotide-binding</keyword>
<keyword id="KW-1185">Reference proteome</keyword>
<keyword id="KW-0735">Signal-anchor</keyword>
<keyword id="KW-0808">Transferase</keyword>
<keyword id="KW-0812">Transmembrane</keyword>
<keyword id="KW-1133">Transmembrane helix</keyword>